<accession>Q32KL2</accession>
<protein>
    <recommendedName>
        <fullName>Proteasome subunit beta type-5</fullName>
        <ecNumber evidence="2">3.4.25.1</ecNumber>
    </recommendedName>
</protein>
<reference evidence="4 5" key="1">
    <citation type="submission" date="2005-11" db="EMBL/GenBank/DDBJ databases">
        <authorList>
            <consortium name="NIH - Mammalian Gene Collection (MGC) project"/>
        </authorList>
    </citation>
    <scope>NUCLEOTIDE SEQUENCE [LARGE SCALE MRNA]</scope>
    <source>
        <strain evidence="5">Crossbred X Angus</strain>
        <tissue evidence="5">Liver</tissue>
    </source>
</reference>
<comment type="function">
    <text evidence="2">Component of the 20S core proteasome complex involved in the proteolytic degradation of most intracellular proteins. This complex plays numerous essential roles within the cell by associating with different regulatory particles. Associated with two 19S regulatory particles, forms the 26S proteasome and thus participates in the ATP-dependent degradation of ubiquitinated proteins. The 26S proteasome plays a key role in the maintenance of protein homeostasis by removing misfolded or damaged proteins that could impair cellular functions, and by removing proteins whose functions are no longer required. Associated with the PA200 or PA28, the 20S proteasome mediates ubiquitin-independent protein degradation. This type of proteolysis is required in several pathways including spermatogenesis (20S-PA200 complex) or generation of a subset of MHC class I-presented antigenic peptides (20S-PA28 complex). Within the 20S core complex, PSMB5 displays a chymotrypsin-like activity.</text>
</comment>
<comment type="catalytic activity">
    <reaction evidence="2">
        <text>Cleavage of peptide bonds with very broad specificity.</text>
        <dbReference type="EC" id="3.4.25.1"/>
    </reaction>
</comment>
<comment type="subunit">
    <text evidence="2">The 26S proteasome consists of a 20S proteasome core and two 19S regulatory subunits. The 20S proteasome core is a barrel-shaped complex made of 28 subunits that are arranged in four stacked rings. The two outer rings are each formed by seven alpha subunits, and the two inner rings are formed by seven beta subunits. The proteolytic activity is exerted by three beta-subunits PSMB5, PSMB6 and PSMB7. Directly interacts with POMP. Interacts with ABCB1 and TAP1.</text>
</comment>
<comment type="subcellular location">
    <subcellularLocation>
        <location evidence="2">Cytoplasm</location>
    </subcellularLocation>
    <subcellularLocation>
        <location evidence="2">Nucleus</location>
    </subcellularLocation>
    <text evidence="2">Translocated from the cytoplasm into the nucleus following interaction with AKIRIN2, which bridges the proteasome with the nuclear import receptor IPO9.</text>
</comment>
<comment type="similarity">
    <text evidence="3">Belongs to the peptidase T1B family.</text>
</comment>
<feature type="propeptide" id="PRO_0000331491" description="Removed in mature form" evidence="1">
    <location>
        <begin position="1"/>
        <end position="59"/>
    </location>
</feature>
<feature type="chain" id="PRO_0000331492" description="Proteasome subunit beta type-5" evidence="2">
    <location>
        <begin position="60"/>
        <end position="263"/>
    </location>
</feature>
<feature type="active site" description="Nucleophile" evidence="2">
    <location>
        <position position="60"/>
    </location>
</feature>
<feature type="binding site" evidence="1">
    <location>
        <position position="108"/>
    </location>
    <ligand>
        <name>bortezomib</name>
        <dbReference type="ChEBI" id="CHEBI:52717"/>
    </ligand>
</feature>
<feature type="strand" evidence="6">
    <location>
        <begin position="62"/>
        <end position="67"/>
    </location>
</feature>
<feature type="strand" evidence="6">
    <location>
        <begin position="70"/>
        <end position="75"/>
    </location>
</feature>
<feature type="strand" evidence="6">
    <location>
        <begin position="79"/>
        <end position="81"/>
    </location>
</feature>
<feature type="strand" evidence="6">
    <location>
        <begin position="84"/>
        <end position="88"/>
    </location>
</feature>
<feature type="strand" evidence="6">
    <location>
        <begin position="93"/>
        <end position="97"/>
    </location>
</feature>
<feature type="strand" evidence="6">
    <location>
        <begin position="100"/>
        <end position="103"/>
    </location>
</feature>
<feature type="helix" evidence="6">
    <location>
        <begin position="108"/>
        <end position="129"/>
    </location>
</feature>
<feature type="helix" evidence="6">
    <location>
        <begin position="135"/>
        <end position="147"/>
    </location>
</feature>
<feature type="turn" evidence="6">
    <location>
        <begin position="148"/>
        <end position="153"/>
    </location>
</feature>
<feature type="strand" evidence="6">
    <location>
        <begin position="156"/>
        <end position="164"/>
    </location>
</feature>
<feature type="strand" evidence="6">
    <location>
        <begin position="167"/>
        <end position="174"/>
    </location>
</feature>
<feature type="strand" evidence="6">
    <location>
        <begin position="179"/>
        <end position="181"/>
    </location>
</feature>
<feature type="strand" evidence="6">
    <location>
        <begin position="183"/>
        <end position="188"/>
    </location>
</feature>
<feature type="helix" evidence="6">
    <location>
        <begin position="191"/>
        <end position="201"/>
    </location>
</feature>
<feature type="helix" evidence="6">
    <location>
        <begin position="208"/>
        <end position="225"/>
    </location>
</feature>
<feature type="strand" evidence="6">
    <location>
        <begin position="231"/>
        <end position="239"/>
    </location>
</feature>
<feature type="strand" evidence="6">
    <location>
        <begin position="242"/>
        <end position="250"/>
    </location>
</feature>
<feature type="helix" evidence="6">
    <location>
        <begin position="251"/>
        <end position="258"/>
    </location>
</feature>
<dbReference type="EC" id="3.4.25.1" evidence="2"/>
<dbReference type="EMBL" id="BC110039">
    <property type="protein sequence ID" value="AAI10040.1"/>
    <property type="molecule type" value="mRNA"/>
</dbReference>
<dbReference type="RefSeq" id="NP_001032701.1">
    <property type="nucleotide sequence ID" value="NM_001037612.2"/>
</dbReference>
<dbReference type="PDB" id="1IRU">
    <property type="method" value="X-ray"/>
    <property type="resolution" value="2.75 A"/>
    <property type="chains" value="L/Z=60-262"/>
</dbReference>
<dbReference type="PDB" id="8AZK">
    <property type="method" value="EM"/>
    <property type="resolution" value="3.10 A"/>
    <property type="chains" value="L/Z=60-263"/>
</dbReference>
<dbReference type="PDB" id="8FZ5">
    <property type="method" value="EM"/>
    <property type="resolution" value="2.23 A"/>
    <property type="chains" value="L/Z=1-263"/>
</dbReference>
<dbReference type="PDB" id="8FZ6">
    <property type="method" value="EM"/>
    <property type="resolution" value="2.54 A"/>
    <property type="chains" value="L/Z=1-263"/>
</dbReference>
<dbReference type="PDBsum" id="1IRU"/>
<dbReference type="PDBsum" id="8AZK"/>
<dbReference type="PDBsum" id="8FZ5"/>
<dbReference type="PDBsum" id="8FZ6"/>
<dbReference type="EMDB" id="EMD-15767"/>
<dbReference type="EMDB" id="EMD-29603"/>
<dbReference type="EMDB" id="EMD-29604"/>
<dbReference type="SMR" id="Q32KL2"/>
<dbReference type="FunCoup" id="Q32KL2">
    <property type="interactions" value="2685"/>
</dbReference>
<dbReference type="IntAct" id="Q32KL2">
    <property type="interactions" value="1"/>
</dbReference>
<dbReference type="STRING" id="9913.ENSBTAP00000016918"/>
<dbReference type="MEROPS" id="T01.012"/>
<dbReference type="PaxDb" id="9913-ENSBTAP00000016918"/>
<dbReference type="Ensembl" id="ENSBTAT00000016918.4">
    <property type="protein sequence ID" value="ENSBTAP00000016918.2"/>
    <property type="gene ID" value="ENSBTAG00000012726.5"/>
</dbReference>
<dbReference type="GeneID" id="534640"/>
<dbReference type="KEGG" id="bta:534640"/>
<dbReference type="CTD" id="5693"/>
<dbReference type="VEuPathDB" id="HostDB:ENSBTAG00000012726"/>
<dbReference type="VGNC" id="VGNC:33449">
    <property type="gene designation" value="PSMB5"/>
</dbReference>
<dbReference type="eggNOG" id="KOG0175">
    <property type="taxonomic scope" value="Eukaryota"/>
</dbReference>
<dbReference type="GeneTree" id="ENSGT00940000157841"/>
<dbReference type="HOGENOM" id="CLU_035750_7_3_1"/>
<dbReference type="InParanoid" id="Q32KL2"/>
<dbReference type="OMA" id="NLGMAMQ"/>
<dbReference type="OrthoDB" id="37597at2759"/>
<dbReference type="TreeFam" id="TF106223"/>
<dbReference type="Reactome" id="R-BTA-1169091">
    <property type="pathway name" value="Activation of NF-kappaB in B cells"/>
</dbReference>
<dbReference type="Reactome" id="R-BTA-1234176">
    <property type="pathway name" value="Oxygen-dependent proline hydroxylation of Hypoxia-inducible Factor Alpha"/>
</dbReference>
<dbReference type="Reactome" id="R-BTA-1236978">
    <property type="pathway name" value="Cross-presentation of soluble exogenous antigens (endosomes)"/>
</dbReference>
<dbReference type="Reactome" id="R-BTA-174084">
    <property type="pathway name" value="Autodegradation of Cdh1 by Cdh1:APC/C"/>
</dbReference>
<dbReference type="Reactome" id="R-BTA-174154">
    <property type="pathway name" value="APC/C:Cdc20 mediated degradation of Securin"/>
</dbReference>
<dbReference type="Reactome" id="R-BTA-174178">
    <property type="pathway name" value="APC/C:Cdh1 mediated degradation of Cdc20 and other APC/C:Cdh1 targeted proteins in late mitosis/early G1"/>
</dbReference>
<dbReference type="Reactome" id="R-BTA-174184">
    <property type="pathway name" value="Cdc20:Phospho-APC/C mediated degradation of Cyclin A"/>
</dbReference>
<dbReference type="Reactome" id="R-BTA-187577">
    <property type="pathway name" value="SCF(Skp2)-mediated degradation of p27/p21"/>
</dbReference>
<dbReference type="Reactome" id="R-BTA-195253">
    <property type="pathway name" value="Degradation of beta-catenin by the destruction complex"/>
</dbReference>
<dbReference type="Reactome" id="R-BTA-202424">
    <property type="pathway name" value="Downstream TCR signaling"/>
</dbReference>
<dbReference type="Reactome" id="R-BTA-2467813">
    <property type="pathway name" value="Separation of Sister Chromatids"/>
</dbReference>
<dbReference type="Reactome" id="R-BTA-2871837">
    <property type="pathway name" value="FCERI mediated NF-kB activation"/>
</dbReference>
<dbReference type="Reactome" id="R-BTA-349425">
    <property type="pathway name" value="Autodegradation of the E3 ubiquitin ligase COP1"/>
</dbReference>
<dbReference type="Reactome" id="R-BTA-350562">
    <property type="pathway name" value="Regulation of ornithine decarboxylase (ODC)"/>
</dbReference>
<dbReference type="Reactome" id="R-BTA-382556">
    <property type="pathway name" value="ABC-family proteins mediated transport"/>
</dbReference>
<dbReference type="Reactome" id="R-BTA-450408">
    <property type="pathway name" value="AUF1 (hnRNP D0) binds and destabilizes mRNA"/>
</dbReference>
<dbReference type="Reactome" id="R-BTA-4608870">
    <property type="pathway name" value="Asymmetric localization of PCP proteins"/>
</dbReference>
<dbReference type="Reactome" id="R-BTA-4641257">
    <property type="pathway name" value="Degradation of AXIN"/>
</dbReference>
<dbReference type="Reactome" id="R-BTA-4641258">
    <property type="pathway name" value="Degradation of DVL"/>
</dbReference>
<dbReference type="Reactome" id="R-BTA-5358346">
    <property type="pathway name" value="Hedgehog ligand biogenesis"/>
</dbReference>
<dbReference type="Reactome" id="R-BTA-5607761">
    <property type="pathway name" value="Dectin-1 mediated noncanonical NF-kB signaling"/>
</dbReference>
<dbReference type="Reactome" id="R-BTA-5607764">
    <property type="pathway name" value="CLEC7A (Dectin-1) signaling"/>
</dbReference>
<dbReference type="Reactome" id="R-BTA-5610780">
    <property type="pathway name" value="Degradation of GLI1 by the proteasome"/>
</dbReference>
<dbReference type="Reactome" id="R-BTA-5610785">
    <property type="pathway name" value="GLI3 is processed to GLI3R by the proteasome"/>
</dbReference>
<dbReference type="Reactome" id="R-BTA-5632684">
    <property type="pathway name" value="Hedgehog 'on' state"/>
</dbReference>
<dbReference type="Reactome" id="R-BTA-5668541">
    <property type="pathway name" value="TNFR2 non-canonical NF-kB pathway"/>
</dbReference>
<dbReference type="Reactome" id="R-BTA-5676590">
    <property type="pathway name" value="NIK--&gt;noncanonical NF-kB signaling"/>
</dbReference>
<dbReference type="Reactome" id="R-BTA-5687128">
    <property type="pathway name" value="MAPK6/MAPK4 signaling"/>
</dbReference>
<dbReference type="Reactome" id="R-BTA-5689603">
    <property type="pathway name" value="UCH proteinases"/>
</dbReference>
<dbReference type="Reactome" id="R-BTA-5689880">
    <property type="pathway name" value="Ub-specific processing proteases"/>
</dbReference>
<dbReference type="Reactome" id="R-BTA-68867">
    <property type="pathway name" value="Assembly of the pre-replicative complex"/>
</dbReference>
<dbReference type="Reactome" id="R-BTA-68949">
    <property type="pathway name" value="Orc1 removal from chromatin"/>
</dbReference>
<dbReference type="Reactome" id="R-BTA-69017">
    <property type="pathway name" value="CDK-mediated phosphorylation and removal of Cdc6"/>
</dbReference>
<dbReference type="Reactome" id="R-BTA-69481">
    <property type="pathway name" value="G2/M Checkpoints"/>
</dbReference>
<dbReference type="Reactome" id="R-BTA-69601">
    <property type="pathway name" value="Ubiquitin Mediated Degradation of Phosphorylated Cdc25A"/>
</dbReference>
<dbReference type="Reactome" id="R-BTA-75815">
    <property type="pathway name" value="Ubiquitin-dependent degradation of Cyclin D"/>
</dbReference>
<dbReference type="Reactome" id="R-BTA-8852276">
    <property type="pathway name" value="The role of GTSE1 in G2/M progression after G2 checkpoint"/>
</dbReference>
<dbReference type="Reactome" id="R-BTA-8854050">
    <property type="pathway name" value="FBXL7 down-regulates AURKA during mitotic entry and in early mitosis"/>
</dbReference>
<dbReference type="Reactome" id="R-BTA-8939236">
    <property type="pathway name" value="RUNX1 regulates transcription of genes involved in differentiation of HSCs"/>
</dbReference>
<dbReference type="Reactome" id="R-BTA-8939902">
    <property type="pathway name" value="Regulation of RUNX2 expression and activity"/>
</dbReference>
<dbReference type="Reactome" id="R-BTA-8941858">
    <property type="pathway name" value="Regulation of RUNX3 expression and activity"/>
</dbReference>
<dbReference type="Reactome" id="R-BTA-8948751">
    <property type="pathway name" value="Regulation of PTEN stability and activity"/>
</dbReference>
<dbReference type="Reactome" id="R-BTA-8951664">
    <property type="pathway name" value="Neddylation"/>
</dbReference>
<dbReference type="Reactome" id="R-BTA-9020702">
    <property type="pathway name" value="Interleukin-1 signaling"/>
</dbReference>
<dbReference type="Reactome" id="R-BTA-9755511">
    <property type="pathway name" value="KEAP1-NFE2L2 pathway"/>
</dbReference>
<dbReference type="Reactome" id="R-BTA-9762114">
    <property type="pathway name" value="GSK3B and BTRC:CUL1-mediated-degradation of NFE2L2"/>
</dbReference>
<dbReference type="Reactome" id="R-BTA-983168">
    <property type="pathway name" value="Antigen processing: Ubiquitination &amp; Proteasome degradation"/>
</dbReference>
<dbReference type="Reactome" id="R-BTA-9907900">
    <property type="pathway name" value="Proteasome assembly"/>
</dbReference>
<dbReference type="EvolutionaryTrace" id="Q32KL2"/>
<dbReference type="Proteomes" id="UP000009136">
    <property type="component" value="Chromosome 10"/>
</dbReference>
<dbReference type="Bgee" id="ENSBTAG00000012726">
    <property type="expression patterns" value="Expressed in tongue muscle and 106 other cell types or tissues"/>
</dbReference>
<dbReference type="GO" id="GO:0005813">
    <property type="term" value="C:centrosome"/>
    <property type="evidence" value="ECO:0007669"/>
    <property type="project" value="Ensembl"/>
</dbReference>
<dbReference type="GO" id="GO:0005829">
    <property type="term" value="C:cytosol"/>
    <property type="evidence" value="ECO:0000318"/>
    <property type="project" value="GO_Central"/>
</dbReference>
<dbReference type="GO" id="GO:0005654">
    <property type="term" value="C:nucleoplasm"/>
    <property type="evidence" value="ECO:0007669"/>
    <property type="project" value="Ensembl"/>
</dbReference>
<dbReference type="GO" id="GO:0005634">
    <property type="term" value="C:nucleus"/>
    <property type="evidence" value="ECO:0000318"/>
    <property type="project" value="GO_Central"/>
</dbReference>
<dbReference type="GO" id="GO:0005839">
    <property type="term" value="C:proteasome core complex"/>
    <property type="evidence" value="ECO:0000250"/>
    <property type="project" value="UniProtKB"/>
</dbReference>
<dbReference type="GO" id="GO:0019774">
    <property type="term" value="C:proteasome core complex, beta-subunit complex"/>
    <property type="evidence" value="ECO:0000250"/>
    <property type="project" value="UniProtKB"/>
</dbReference>
<dbReference type="GO" id="GO:0004175">
    <property type="term" value="F:endopeptidase activity"/>
    <property type="evidence" value="ECO:0000318"/>
    <property type="project" value="GO_Central"/>
</dbReference>
<dbReference type="GO" id="GO:0004298">
    <property type="term" value="F:threonine-type endopeptidase activity"/>
    <property type="evidence" value="ECO:0007669"/>
    <property type="project" value="UniProtKB-KW"/>
</dbReference>
<dbReference type="GO" id="GO:0043161">
    <property type="term" value="P:proteasome-mediated ubiquitin-dependent protein catabolic process"/>
    <property type="evidence" value="ECO:0000318"/>
    <property type="project" value="GO_Central"/>
</dbReference>
<dbReference type="GO" id="GO:0006979">
    <property type="term" value="P:response to oxidative stress"/>
    <property type="evidence" value="ECO:0007669"/>
    <property type="project" value="Ensembl"/>
</dbReference>
<dbReference type="CDD" id="cd03761">
    <property type="entry name" value="proteasome_beta_type_5"/>
    <property type="match status" value="1"/>
</dbReference>
<dbReference type="FunFam" id="3.60.20.10:FF:000030">
    <property type="entry name" value="Proteasome subunit beta"/>
    <property type="match status" value="1"/>
</dbReference>
<dbReference type="Gene3D" id="3.60.20.10">
    <property type="entry name" value="Glutamine Phosphoribosylpyrophosphate, subunit 1, domain 1"/>
    <property type="match status" value="1"/>
</dbReference>
<dbReference type="InterPro" id="IPR029055">
    <property type="entry name" value="Ntn_hydrolases_N"/>
</dbReference>
<dbReference type="InterPro" id="IPR000243">
    <property type="entry name" value="Pept_T1A_subB"/>
</dbReference>
<dbReference type="InterPro" id="IPR016050">
    <property type="entry name" value="Proteasome_bsu_CS"/>
</dbReference>
<dbReference type="InterPro" id="IPR001353">
    <property type="entry name" value="Proteasome_sua/b"/>
</dbReference>
<dbReference type="InterPro" id="IPR023333">
    <property type="entry name" value="Proteasome_suB-type"/>
</dbReference>
<dbReference type="PANTHER" id="PTHR32194">
    <property type="entry name" value="METALLOPROTEASE TLDD"/>
    <property type="match status" value="1"/>
</dbReference>
<dbReference type="PANTHER" id="PTHR32194:SF11">
    <property type="entry name" value="PROTEASOME SUBUNIT BETA"/>
    <property type="match status" value="1"/>
</dbReference>
<dbReference type="Pfam" id="PF00227">
    <property type="entry name" value="Proteasome"/>
    <property type="match status" value="1"/>
</dbReference>
<dbReference type="PRINTS" id="PR00141">
    <property type="entry name" value="PROTEASOME"/>
</dbReference>
<dbReference type="SUPFAM" id="SSF56235">
    <property type="entry name" value="N-terminal nucleophile aminohydrolases (Ntn hydrolases)"/>
    <property type="match status" value="1"/>
</dbReference>
<dbReference type="PROSITE" id="PS00854">
    <property type="entry name" value="PROTEASOME_BETA_1"/>
    <property type="match status" value="1"/>
</dbReference>
<dbReference type="PROSITE" id="PS51476">
    <property type="entry name" value="PROTEASOME_BETA_2"/>
    <property type="match status" value="1"/>
</dbReference>
<gene>
    <name evidence="5" type="primary">PSMB5</name>
</gene>
<sequence>MALASVLERPLSVNRRGFFGLGGRADLLDLGPGSPSDGLSLAAPSWGVPEEPRIEILHGTTTLAFKFRHGVIVAADSRATAGAYIASQTVKKVIEINPYLLGTMAGGAADCSFWERLLARQCRIYELRNKERISVAAASKLLANMVYQYKGMGLSMGTMICGWDKRGPGLYYVDSEGNRISGATFSVGSGSVYAYGVMDRGYSYDLEVEEAYDLARRAIYQATYRDAYSGGSVSLYHVREDGWIRVSSDNVADLHDKYSGSTH</sequence>
<name>PSB5_BOVIN</name>
<proteinExistence type="evidence at protein level"/>
<evidence type="ECO:0000250" key="1"/>
<evidence type="ECO:0000250" key="2">
    <source>
        <dbReference type="UniProtKB" id="P28074"/>
    </source>
</evidence>
<evidence type="ECO:0000255" key="3">
    <source>
        <dbReference type="PROSITE-ProRule" id="PRU00809"/>
    </source>
</evidence>
<evidence type="ECO:0000305" key="4"/>
<evidence type="ECO:0000312" key="5">
    <source>
        <dbReference type="EMBL" id="AAI10040.1"/>
    </source>
</evidence>
<evidence type="ECO:0007829" key="6">
    <source>
        <dbReference type="PDB" id="8FZ5"/>
    </source>
</evidence>
<keyword id="KW-0002">3D-structure</keyword>
<keyword id="KW-0963">Cytoplasm</keyword>
<keyword id="KW-0378">Hydrolase</keyword>
<keyword id="KW-0539">Nucleus</keyword>
<keyword id="KW-0645">Protease</keyword>
<keyword id="KW-0647">Proteasome</keyword>
<keyword id="KW-1185">Reference proteome</keyword>
<keyword id="KW-0888">Threonine protease</keyword>
<keyword id="KW-0865">Zymogen</keyword>
<organism>
    <name type="scientific">Bos taurus</name>
    <name type="common">Bovine</name>
    <dbReference type="NCBI Taxonomy" id="9913"/>
    <lineage>
        <taxon>Eukaryota</taxon>
        <taxon>Metazoa</taxon>
        <taxon>Chordata</taxon>
        <taxon>Craniata</taxon>
        <taxon>Vertebrata</taxon>
        <taxon>Euteleostomi</taxon>
        <taxon>Mammalia</taxon>
        <taxon>Eutheria</taxon>
        <taxon>Laurasiatheria</taxon>
        <taxon>Artiodactyla</taxon>
        <taxon>Ruminantia</taxon>
        <taxon>Pecora</taxon>
        <taxon>Bovidae</taxon>
        <taxon>Bovinae</taxon>
        <taxon>Bos</taxon>
    </lineage>
</organism>